<dbReference type="EC" id="1.17.7.4" evidence="3"/>
<dbReference type="EMBL" id="AC103550">
    <property type="protein sequence ID" value="AAT77894.1"/>
    <property type="molecule type" value="Genomic_DNA"/>
</dbReference>
<dbReference type="EMBL" id="DP000009">
    <property type="protein sequence ID" value="ABF98702.1"/>
    <property type="molecule type" value="Genomic_DNA"/>
</dbReference>
<dbReference type="EMBL" id="AP008209">
    <property type="protein sequence ID" value="BAF13081.1"/>
    <property type="molecule type" value="Genomic_DNA"/>
</dbReference>
<dbReference type="EMBL" id="AP014959">
    <property type="protein sequence ID" value="BAS86228.1"/>
    <property type="molecule type" value="Genomic_DNA"/>
</dbReference>
<dbReference type="EMBL" id="AK064873">
    <property type="protein sequence ID" value="BAG89250.1"/>
    <property type="molecule type" value="mRNA"/>
</dbReference>
<dbReference type="EMBL" id="AK121561">
    <property type="protein sequence ID" value="BAH00550.1"/>
    <property type="molecule type" value="mRNA"/>
</dbReference>
<dbReference type="RefSeq" id="XP_015632597.1">
    <property type="nucleotide sequence ID" value="XM_015777111.1"/>
</dbReference>
<dbReference type="SMR" id="Q6AVG6"/>
<dbReference type="FunCoup" id="Q6AVG6">
    <property type="interactions" value="287"/>
</dbReference>
<dbReference type="STRING" id="39947.Q6AVG6"/>
<dbReference type="PaxDb" id="39947-Q6AVG6"/>
<dbReference type="EnsemblPlants" id="Os03t0731900-01">
    <property type="protein sequence ID" value="Os03t0731900-01"/>
    <property type="gene ID" value="Os03g0731900"/>
</dbReference>
<dbReference type="Gramene" id="Os03t0731900-01">
    <property type="protein sequence ID" value="Os03t0731900-01"/>
    <property type="gene ID" value="Os03g0731900"/>
</dbReference>
<dbReference type="KEGG" id="dosa:Os03g0731900"/>
<dbReference type="eggNOG" id="ENOG502QPIQ">
    <property type="taxonomic scope" value="Eukaryota"/>
</dbReference>
<dbReference type="HOGENOM" id="CLU_027486_4_1_1"/>
<dbReference type="InParanoid" id="Q6AVG6"/>
<dbReference type="OMA" id="DRIWLTN"/>
<dbReference type="OrthoDB" id="1698201at2759"/>
<dbReference type="PlantReactome" id="R-OSA-1119464">
    <property type="pathway name" value="Methylerythritol phosphate pathway"/>
</dbReference>
<dbReference type="UniPathway" id="UPA00056">
    <property type="reaction ID" value="UER00097"/>
</dbReference>
<dbReference type="UniPathway" id="UPA00059">
    <property type="reaction ID" value="UER00105"/>
</dbReference>
<dbReference type="Proteomes" id="UP000000763">
    <property type="component" value="Chromosome 3"/>
</dbReference>
<dbReference type="Proteomes" id="UP000059680">
    <property type="component" value="Chromosome 3"/>
</dbReference>
<dbReference type="GO" id="GO:0009570">
    <property type="term" value="C:chloroplast stroma"/>
    <property type="evidence" value="ECO:0007669"/>
    <property type="project" value="UniProtKB-SubCell"/>
</dbReference>
<dbReference type="GO" id="GO:0051539">
    <property type="term" value="F:4 iron, 4 sulfur cluster binding"/>
    <property type="evidence" value="ECO:0007669"/>
    <property type="project" value="UniProtKB-KW"/>
</dbReference>
<dbReference type="GO" id="GO:0051745">
    <property type="term" value="F:4-hydroxy-3-methylbut-2-enyl diphosphate reductase activity"/>
    <property type="evidence" value="ECO:0007669"/>
    <property type="project" value="UniProtKB-EC"/>
</dbReference>
<dbReference type="GO" id="GO:0046872">
    <property type="term" value="F:metal ion binding"/>
    <property type="evidence" value="ECO:0007669"/>
    <property type="project" value="UniProtKB-KW"/>
</dbReference>
<dbReference type="GO" id="GO:0050992">
    <property type="term" value="P:dimethylallyl diphosphate biosynthetic process"/>
    <property type="evidence" value="ECO:0007669"/>
    <property type="project" value="UniProtKB-UniPathway"/>
</dbReference>
<dbReference type="GO" id="GO:0019288">
    <property type="term" value="P:isopentenyl diphosphate biosynthetic process, methylerythritol 4-phosphate pathway"/>
    <property type="evidence" value="ECO:0007669"/>
    <property type="project" value="UniProtKB-UniPathway"/>
</dbReference>
<dbReference type="CDD" id="cd13944">
    <property type="entry name" value="lytB_ispH"/>
    <property type="match status" value="1"/>
</dbReference>
<dbReference type="Gene3D" id="3.40.50.11270">
    <property type="match status" value="1"/>
</dbReference>
<dbReference type="Gene3D" id="3.40.1010.20">
    <property type="entry name" value="4-hydroxy-3-methylbut-2-enyl diphosphate reductase, catalytic domain"/>
    <property type="match status" value="2"/>
</dbReference>
<dbReference type="HAMAP" id="MF_00191">
    <property type="entry name" value="IspH"/>
    <property type="match status" value="1"/>
</dbReference>
<dbReference type="InterPro" id="IPR003451">
    <property type="entry name" value="LytB/IspH"/>
</dbReference>
<dbReference type="NCBIfam" id="TIGR00216">
    <property type="entry name" value="ispH_lytB"/>
    <property type="match status" value="1"/>
</dbReference>
<dbReference type="NCBIfam" id="NF009911">
    <property type="entry name" value="PRK13371.1"/>
    <property type="match status" value="1"/>
</dbReference>
<dbReference type="PANTHER" id="PTHR31619">
    <property type="entry name" value="4-HYDROXY-3-METHYLBUT-2-ENYL DIPHOSPHATE REDUCTASE, CHLOROPLASTIC"/>
    <property type="match status" value="1"/>
</dbReference>
<dbReference type="PANTHER" id="PTHR31619:SF5">
    <property type="entry name" value="4-HYDROXY-3-METHYLBUT-2-ENYL DIPHOSPHATE REDUCTASE, CHLOROPLASTIC"/>
    <property type="match status" value="1"/>
</dbReference>
<dbReference type="Pfam" id="PF02401">
    <property type="entry name" value="LYTB"/>
    <property type="match status" value="1"/>
</dbReference>
<comment type="function">
    <text evidence="3">Enzyme of the plastid non-mevalonate pathway for isoprenoid biosynthesis that converts 1-hydroxy-2-methyl-2-(E)-butenyl 4-diphosphate into isopentenyl diphosphate (IPP) and dimethylallyl diphosphate (DMAPP). Is essential for chloroplast development.</text>
</comment>
<comment type="catalytic activity">
    <reaction evidence="3">
        <text>isopentenyl diphosphate + 2 oxidized [2Fe-2S]-[ferredoxin] + H2O = (2E)-4-hydroxy-3-methylbut-2-enyl diphosphate + 2 reduced [2Fe-2S]-[ferredoxin] + 2 H(+)</text>
        <dbReference type="Rhea" id="RHEA:24488"/>
        <dbReference type="Rhea" id="RHEA-COMP:10000"/>
        <dbReference type="Rhea" id="RHEA-COMP:10001"/>
        <dbReference type="ChEBI" id="CHEBI:15377"/>
        <dbReference type="ChEBI" id="CHEBI:15378"/>
        <dbReference type="ChEBI" id="CHEBI:33737"/>
        <dbReference type="ChEBI" id="CHEBI:33738"/>
        <dbReference type="ChEBI" id="CHEBI:128753"/>
        <dbReference type="ChEBI" id="CHEBI:128769"/>
        <dbReference type="EC" id="1.17.7.4"/>
    </reaction>
</comment>
<comment type="catalytic activity">
    <reaction evidence="3">
        <text>dimethylallyl diphosphate + 2 oxidized [2Fe-2S]-[ferredoxin] + H2O = (2E)-4-hydroxy-3-methylbut-2-enyl diphosphate + 2 reduced [2Fe-2S]-[ferredoxin] + 2 H(+)</text>
        <dbReference type="Rhea" id="RHEA:24825"/>
        <dbReference type="Rhea" id="RHEA-COMP:10000"/>
        <dbReference type="Rhea" id="RHEA-COMP:10001"/>
        <dbReference type="ChEBI" id="CHEBI:15377"/>
        <dbReference type="ChEBI" id="CHEBI:15378"/>
        <dbReference type="ChEBI" id="CHEBI:33737"/>
        <dbReference type="ChEBI" id="CHEBI:33738"/>
        <dbReference type="ChEBI" id="CHEBI:57623"/>
        <dbReference type="ChEBI" id="CHEBI:128753"/>
        <dbReference type="EC" id="1.17.7.4"/>
    </reaction>
</comment>
<comment type="cofactor">
    <cofactor evidence="2">
        <name>[4Fe-4S] cluster</name>
        <dbReference type="ChEBI" id="CHEBI:49883"/>
    </cofactor>
    <text evidence="2">Binds 1 [4Fe-4S] cluster per subunit.</text>
</comment>
<comment type="pathway">
    <text evidence="6">Isoprenoid biosynthesis; dimethylallyl diphosphate biosynthesis; dimethylallyl diphosphate from (2E)-4-hydroxy-3-methylbutenyl diphosphate: step 1/1.</text>
</comment>
<comment type="pathway">
    <text evidence="6">Isoprenoid biosynthesis; isopentenyl diphosphate biosynthesis via DXP pathway; isopentenyl diphosphate from 1-deoxy-D-xylulose 5-phosphate: step 6/6.</text>
</comment>
<comment type="subunit">
    <text evidence="2">Homodimer.</text>
</comment>
<comment type="subcellular location">
    <subcellularLocation>
        <location evidence="3">Plastid</location>
        <location evidence="3">Chloroplast stroma</location>
    </subcellularLocation>
</comment>
<comment type="induction">
    <text evidence="5">Induced by jasmonate, copper, UV and chitin oligosaccharide elicitor.</text>
</comment>
<comment type="similarity">
    <text evidence="6">Belongs to the IspH family.</text>
</comment>
<sequence>MATITTQLRSALLSPAASPSRRARRAPSSVRCDSSAASSLSASASLDADFDKKQFRHNLTRSDNYNRKGFGHKKETLELMSQEYTSDVIKTLKENGNQHTWGPVTVKLAEAYGFCWGVERAVQIAYEARKQFPDDRIWLTNEIIHNPTVNKRLEDMGVQNIPVDAGIKDFDVVEQGDVVVLPAFGAAVEEMYTLNEKKVQIVDTTCPWVSKVWNMVEKHKKGDYTSIIHGKYSHEETVATASFAGTYIIVKNIAEASYVCDYILGGQLDGSSSTKEEFLEKFKNAVSPGFDPDVDLVKVGIANQTTMLKGETEEIGKLVEKTMMRRFGVENVNDHFIAFNTICDATQERQDAMYQLVKEKVDLILVVGGWNSSNTSHLQEIGELSGIPSYWIDSEQRIGPGNKISYKLNHGELVEKENWLPEGPITIGVTSGASTPDKVVEDALQKVFEIKRQEVLQAA</sequence>
<organism>
    <name type="scientific">Oryza sativa subsp. japonica</name>
    <name type="common">Rice</name>
    <dbReference type="NCBI Taxonomy" id="39947"/>
    <lineage>
        <taxon>Eukaryota</taxon>
        <taxon>Viridiplantae</taxon>
        <taxon>Streptophyta</taxon>
        <taxon>Embryophyta</taxon>
        <taxon>Tracheophyta</taxon>
        <taxon>Spermatophyta</taxon>
        <taxon>Magnoliopsida</taxon>
        <taxon>Liliopsida</taxon>
        <taxon>Poales</taxon>
        <taxon>Poaceae</taxon>
        <taxon>BOP clade</taxon>
        <taxon>Oryzoideae</taxon>
        <taxon>Oryzeae</taxon>
        <taxon>Oryzinae</taxon>
        <taxon>Oryza</taxon>
        <taxon>Oryza sativa</taxon>
    </lineage>
</organism>
<protein>
    <recommendedName>
        <fullName evidence="6">4-hydroxy-3-methylbut-2-enyl diphosphate reductase, chloroplastic</fullName>
        <ecNumber evidence="3">1.17.7.4</ecNumber>
    </recommendedName>
</protein>
<gene>
    <name evidence="6" type="primary">ISPH</name>
    <name evidence="9" type="ordered locus">Os03g0731900</name>
    <name evidence="8" type="ordered locus">LOC_Os03g52170</name>
    <name evidence="7" type="ORF">OSJNBa0079G12.18</name>
</gene>
<accession>Q6AVG6</accession>
<accession>A0A0P0W2J7</accession>
<proteinExistence type="evidence at transcript level"/>
<evidence type="ECO:0000250" key="1">
    <source>
        <dbReference type="UniProtKB" id="P62617"/>
    </source>
</evidence>
<evidence type="ECO:0000250" key="2">
    <source>
        <dbReference type="UniProtKB" id="P62623"/>
    </source>
</evidence>
<evidence type="ECO:0000250" key="3">
    <source>
        <dbReference type="UniProtKB" id="Q94B35"/>
    </source>
</evidence>
<evidence type="ECO:0000255" key="4"/>
<evidence type="ECO:0000269" key="5">
    <source>
    </source>
</evidence>
<evidence type="ECO:0000305" key="6"/>
<evidence type="ECO:0000312" key="7">
    <source>
        <dbReference type="EMBL" id="AAT77894.1"/>
    </source>
</evidence>
<evidence type="ECO:0000312" key="8">
    <source>
        <dbReference type="EMBL" id="ABF98702.1"/>
    </source>
</evidence>
<evidence type="ECO:0000312" key="9">
    <source>
        <dbReference type="EMBL" id="BAS86228.1"/>
    </source>
</evidence>
<reference key="1">
    <citation type="journal article" date="2005" name="Genome Res.">
        <title>Sequence, annotation, and analysis of synteny between rice chromosome 3 and diverged grass species.</title>
        <authorList>
            <consortium name="The rice chromosome 3 sequencing consortium"/>
            <person name="Buell C.R."/>
            <person name="Yuan Q."/>
            <person name="Ouyang S."/>
            <person name="Liu J."/>
            <person name="Zhu W."/>
            <person name="Wang A."/>
            <person name="Maiti R."/>
            <person name="Haas B."/>
            <person name="Wortman J."/>
            <person name="Pertea M."/>
            <person name="Jones K.M."/>
            <person name="Kim M."/>
            <person name="Overton L."/>
            <person name="Tsitrin T."/>
            <person name="Fadrosh D."/>
            <person name="Bera J."/>
            <person name="Weaver B."/>
            <person name="Jin S."/>
            <person name="Johri S."/>
            <person name="Reardon M."/>
            <person name="Webb K."/>
            <person name="Hill J."/>
            <person name="Moffat K."/>
            <person name="Tallon L."/>
            <person name="Van Aken S."/>
            <person name="Lewis M."/>
            <person name="Utterback T."/>
            <person name="Feldblyum T."/>
            <person name="Zismann V."/>
            <person name="Iobst S."/>
            <person name="Hsiao J."/>
            <person name="de Vazeille A.R."/>
            <person name="Salzberg S.L."/>
            <person name="White O."/>
            <person name="Fraser C.M."/>
            <person name="Yu Y."/>
            <person name="Kim H."/>
            <person name="Rambo T."/>
            <person name="Currie J."/>
            <person name="Collura K."/>
            <person name="Kernodle-Thompson S."/>
            <person name="Wei F."/>
            <person name="Kudrna K."/>
            <person name="Ammiraju J.S.S."/>
            <person name="Luo M."/>
            <person name="Goicoechea J.L."/>
            <person name="Wing R.A."/>
            <person name="Henry D."/>
            <person name="Oates R."/>
            <person name="Palmer M."/>
            <person name="Pries G."/>
            <person name="Saski C."/>
            <person name="Simmons J."/>
            <person name="Soderlund C."/>
            <person name="Nelson W."/>
            <person name="de la Bastide M."/>
            <person name="Spiegel L."/>
            <person name="Nascimento L."/>
            <person name="Huang E."/>
            <person name="Preston R."/>
            <person name="Zutavern T."/>
            <person name="Palmer L."/>
            <person name="O'Shaughnessy A."/>
            <person name="Dike S."/>
            <person name="McCombie W.R."/>
            <person name="Minx P."/>
            <person name="Cordum H."/>
            <person name="Wilson R."/>
            <person name="Jin W."/>
            <person name="Lee H.R."/>
            <person name="Jiang J."/>
            <person name="Jackson S."/>
        </authorList>
    </citation>
    <scope>NUCLEOTIDE SEQUENCE [LARGE SCALE GENOMIC DNA]</scope>
    <source>
        <strain>cv. Nipponbare</strain>
    </source>
</reference>
<reference key="2">
    <citation type="journal article" date="2005" name="Nature">
        <title>The map-based sequence of the rice genome.</title>
        <authorList>
            <consortium name="International rice genome sequencing project (IRGSP)"/>
        </authorList>
    </citation>
    <scope>NUCLEOTIDE SEQUENCE [LARGE SCALE GENOMIC DNA]</scope>
    <source>
        <strain>cv. Nipponbare</strain>
    </source>
</reference>
<reference key="3">
    <citation type="journal article" date="2008" name="Nucleic Acids Res.">
        <title>The rice annotation project database (RAP-DB): 2008 update.</title>
        <authorList>
            <consortium name="The rice annotation project (RAP)"/>
        </authorList>
    </citation>
    <scope>GENOME REANNOTATION</scope>
    <source>
        <strain>cv. Nipponbare</strain>
    </source>
</reference>
<reference key="4">
    <citation type="journal article" date="2013" name="Rice">
        <title>Improvement of the Oryza sativa Nipponbare reference genome using next generation sequence and optical map data.</title>
        <authorList>
            <person name="Kawahara Y."/>
            <person name="de la Bastide M."/>
            <person name="Hamilton J.P."/>
            <person name="Kanamori H."/>
            <person name="McCombie W.R."/>
            <person name="Ouyang S."/>
            <person name="Schwartz D.C."/>
            <person name="Tanaka T."/>
            <person name="Wu J."/>
            <person name="Zhou S."/>
            <person name="Childs K.L."/>
            <person name="Davidson R.M."/>
            <person name="Lin H."/>
            <person name="Quesada-Ocampo L."/>
            <person name="Vaillancourt B."/>
            <person name="Sakai H."/>
            <person name="Lee S.S."/>
            <person name="Kim J."/>
            <person name="Numa H."/>
            <person name="Itoh T."/>
            <person name="Buell C.R."/>
            <person name="Matsumoto T."/>
        </authorList>
    </citation>
    <scope>GENOME REANNOTATION</scope>
    <source>
        <strain>cv. Nipponbare</strain>
    </source>
</reference>
<reference key="5">
    <citation type="journal article" date="2003" name="Science">
        <title>Collection, mapping, and annotation of over 28,000 cDNA clones from japonica rice.</title>
        <authorList>
            <consortium name="The rice full-length cDNA consortium"/>
        </authorList>
    </citation>
    <scope>NUCLEOTIDE SEQUENCE [LARGE SCALE MRNA]</scope>
    <source>
        <strain>cv. Nipponbare</strain>
    </source>
</reference>
<reference key="6">
    <citation type="journal article" date="2007" name="Plant Mol. Biol.">
        <title>Elicitor induced activation of the methylerythritol phosphate pathway toward phytoalexins biosynthesis in rice.</title>
        <authorList>
            <person name="Okada A."/>
            <person name="Shimizu T."/>
            <person name="Okada K."/>
            <person name="Kuzuyama T."/>
            <person name="Koga J."/>
            <person name="Shibuya N."/>
            <person name="Nojiri H."/>
            <person name="Yamane H."/>
        </authorList>
    </citation>
    <scope>INDUCTION</scope>
</reference>
<keyword id="KW-0004">4Fe-4S</keyword>
<keyword id="KW-0150">Chloroplast</keyword>
<keyword id="KW-0408">Iron</keyword>
<keyword id="KW-0411">Iron-sulfur</keyword>
<keyword id="KW-0414">Isoprene biosynthesis</keyword>
<keyword id="KW-0479">Metal-binding</keyword>
<keyword id="KW-0560">Oxidoreductase</keyword>
<keyword id="KW-0934">Plastid</keyword>
<keyword id="KW-1185">Reference proteome</keyword>
<keyword id="KW-0809">Transit peptide</keyword>
<name>ISPH_ORYSJ</name>
<feature type="transit peptide" description="Chloroplast" evidence="4">
    <location>
        <begin position="1"/>
        <end position="31"/>
    </location>
</feature>
<feature type="chain" id="PRO_0000417593" description="4-hydroxy-3-methylbut-2-enyl diphosphate reductase, chloroplastic">
    <location>
        <begin position="32"/>
        <end position="459"/>
    </location>
</feature>
<feature type="active site" description="Proton donor" evidence="2">
    <location>
        <position position="236"/>
    </location>
</feature>
<feature type="binding site" evidence="2">
    <location>
        <position position="115"/>
    </location>
    <ligand>
        <name>[4Fe-4S] cluster</name>
        <dbReference type="ChEBI" id="CHEBI:49883"/>
    </ligand>
</feature>
<feature type="binding site" evidence="2">
    <location>
        <position position="145"/>
    </location>
    <ligand>
        <name>(2E)-4-hydroxy-3-methylbut-2-enyl diphosphate</name>
        <dbReference type="ChEBI" id="CHEBI:128753"/>
    </ligand>
</feature>
<feature type="binding site" evidence="2">
    <location>
        <position position="206"/>
    </location>
    <ligand>
        <name>[4Fe-4S] cluster</name>
        <dbReference type="ChEBI" id="CHEBI:49883"/>
    </ligand>
</feature>
<feature type="binding site" evidence="2">
    <location>
        <position position="234"/>
    </location>
    <ligand>
        <name>(2E)-4-hydroxy-3-methylbut-2-enyl diphosphate</name>
        <dbReference type="ChEBI" id="CHEBI:128753"/>
    </ligand>
</feature>
<feature type="binding site" evidence="2">
    <location>
        <position position="305"/>
    </location>
    <ligand>
        <name>(2E)-4-hydroxy-3-methylbut-2-enyl diphosphate</name>
        <dbReference type="ChEBI" id="CHEBI:128753"/>
    </ligand>
</feature>
<feature type="binding site" evidence="2">
    <location>
        <position position="343"/>
    </location>
    <ligand>
        <name>[4Fe-4S] cluster</name>
        <dbReference type="ChEBI" id="CHEBI:49883"/>
    </ligand>
</feature>
<feature type="binding site" evidence="2">
    <location>
        <begin position="372"/>
        <end position="374"/>
    </location>
    <ligand>
        <name>(2E)-4-hydroxy-3-methylbut-2-enyl diphosphate</name>
        <dbReference type="ChEBI" id="CHEBI:128753"/>
    </ligand>
</feature>
<feature type="binding site" evidence="1">
    <location>
        <position position="434"/>
    </location>
    <ligand>
        <name>(2E)-4-hydroxy-3-methylbut-2-enyl diphosphate</name>
        <dbReference type="ChEBI" id="CHEBI:128753"/>
    </ligand>
</feature>